<proteinExistence type="evidence at protein level"/>
<organism>
    <name type="scientific">Dickeya dadantii (strain 3937)</name>
    <name type="common">Erwinia chrysanthemi (strain 3937)</name>
    <dbReference type="NCBI Taxonomy" id="198628"/>
    <lineage>
        <taxon>Bacteria</taxon>
        <taxon>Pseudomonadati</taxon>
        <taxon>Pseudomonadota</taxon>
        <taxon>Gammaproteobacteria</taxon>
        <taxon>Enterobacterales</taxon>
        <taxon>Pectobacteriaceae</taxon>
        <taxon>Dickeya</taxon>
    </lineage>
</organism>
<evidence type="ECO:0000255" key="1"/>
<evidence type="ECO:0000269" key="2">
    <source>
    </source>
</evidence>
<evidence type="ECO:0000303" key="3">
    <source>
    </source>
</evidence>
<evidence type="ECO:0000305" key="4"/>
<evidence type="ECO:0000305" key="5">
    <source>
    </source>
</evidence>
<evidence type="ECO:0000312" key="6">
    <source>
        <dbReference type="EMBL" id="AAQ06632.1"/>
    </source>
</evidence>
<evidence type="ECO:0000312" key="7">
    <source>
        <dbReference type="EMBL" id="ADM99774.1"/>
    </source>
</evidence>
<feature type="signal peptide" evidence="1">
    <location>
        <begin position="1"/>
        <end position="21"/>
    </location>
</feature>
<feature type="chain" id="PRO_5003140232" description="Glycine betaine-binding periplasmic protein OusX">
    <location>
        <begin position="22"/>
        <end position="332"/>
    </location>
</feature>
<gene>
    <name evidence="3" type="primary">ousX</name>
    <name evidence="6" type="synonym">ousBX</name>
    <name evidence="7" type="ordered locus">Dda3937_00899</name>
</gene>
<accession>E0SCY3</accession>
<accession>Q71JC8</accession>
<dbReference type="EMBL" id="AF494101">
    <property type="protein sequence ID" value="AAQ06632.1"/>
    <property type="molecule type" value="Genomic_DNA"/>
</dbReference>
<dbReference type="EMBL" id="CP002038">
    <property type="protein sequence ID" value="ADM99774.1"/>
    <property type="molecule type" value="Genomic_DNA"/>
</dbReference>
<dbReference type="RefSeq" id="WP_013319199.1">
    <property type="nucleotide sequence ID" value="NC_014500.1"/>
</dbReference>
<dbReference type="SMR" id="E0SCY3"/>
<dbReference type="STRING" id="198628.Dda3937_00899"/>
<dbReference type="KEGG" id="ddd:Dda3937_00899"/>
<dbReference type="PATRIC" id="fig|198628.6.peg.3521"/>
<dbReference type="eggNOG" id="COG2113">
    <property type="taxonomic scope" value="Bacteria"/>
</dbReference>
<dbReference type="HOGENOM" id="CLU_070055_0_0_6"/>
<dbReference type="OrthoDB" id="9787902at2"/>
<dbReference type="Proteomes" id="UP000006859">
    <property type="component" value="Chromosome"/>
</dbReference>
<dbReference type="GO" id="GO:0043190">
    <property type="term" value="C:ATP-binding cassette (ABC) transporter complex"/>
    <property type="evidence" value="ECO:0007669"/>
    <property type="project" value="InterPro"/>
</dbReference>
<dbReference type="GO" id="GO:0042597">
    <property type="term" value="C:periplasmic space"/>
    <property type="evidence" value="ECO:0007669"/>
    <property type="project" value="UniProtKB-SubCell"/>
</dbReference>
<dbReference type="GO" id="GO:0022857">
    <property type="term" value="F:transmembrane transporter activity"/>
    <property type="evidence" value="ECO:0007669"/>
    <property type="project" value="InterPro"/>
</dbReference>
<dbReference type="GO" id="GO:0006865">
    <property type="term" value="P:amino acid transport"/>
    <property type="evidence" value="ECO:0007669"/>
    <property type="project" value="UniProtKB-KW"/>
</dbReference>
<dbReference type="CDD" id="cd13638">
    <property type="entry name" value="PBP2_EcProx_like"/>
    <property type="match status" value="1"/>
</dbReference>
<dbReference type="Gene3D" id="3.40.190.100">
    <property type="entry name" value="Glycine betaine-binding periplasmic protein, domain 2"/>
    <property type="match status" value="1"/>
</dbReference>
<dbReference type="Gene3D" id="3.40.190.10">
    <property type="entry name" value="Periplasmic binding protein-like II"/>
    <property type="match status" value="1"/>
</dbReference>
<dbReference type="InterPro" id="IPR007210">
    <property type="entry name" value="ABC_Gly_betaine_transp_sub-bd"/>
</dbReference>
<dbReference type="NCBIfam" id="NF008334">
    <property type="entry name" value="PRK11119.1"/>
    <property type="match status" value="1"/>
</dbReference>
<dbReference type="Pfam" id="PF04069">
    <property type="entry name" value="OpuAC"/>
    <property type="match status" value="1"/>
</dbReference>
<dbReference type="SUPFAM" id="SSF53850">
    <property type="entry name" value="Periplasmic binding protein-like II"/>
    <property type="match status" value="1"/>
</dbReference>
<keyword id="KW-0029">Amino-acid transport</keyword>
<keyword id="KW-0574">Periplasm</keyword>
<keyword id="KW-1185">Reference proteome</keyword>
<keyword id="KW-0732">Signal</keyword>
<keyword id="KW-0813">Transport</keyword>
<protein>
    <recommendedName>
        <fullName evidence="4">Glycine betaine-binding periplasmic protein OusX</fullName>
    </recommendedName>
</protein>
<sequence>MRNISMATLALTTVLSTGLFAADDLPGKGITVKPVQSTISEETFQTLLVSKALEKLGYTVDKPSEVDYNVGYTSIANGDATFTAVNWQPLHDDMYQAAGGDAKFYRQGVYVSGAAQGYLIDKKTAERYHITRLDQLKDPKLAKLFDTNGDGKADLTGCNPGWGCDSVINHQIQAYGLGDTVNHNQGNYAALIADTIARYKQGKSVIFFTWTPYWVSDVLVPGRDVVWLQVPFSSLPGKQKGTDTKLPNGANYGFPVNNMRIVANKDWAEKNPAAAKLFAIMKLPLADINAQNLRMHQGEASQQDIERHVNGWINAHQAQFDGWLNAARAAAK</sequence>
<reference key="1">
    <citation type="journal article" date="2005" name="Appl. Environ. Microbiol.">
        <title>OusB, a broad-specificity ABC-type transporter from Erwinia chrysanthemi, mediates uptake of glycine betaine and choline with a high affinity.</title>
        <authorList>
            <person name="Choquet G."/>
            <person name="Jehan N."/>
            <person name="Pissavin C."/>
            <person name="Blanco C."/>
            <person name="Jebbar M."/>
        </authorList>
    </citation>
    <scope>NUCLEOTIDE SEQUENCE [GENOMIC DNA]</scope>
    <scope>FUNCTION</scope>
    <scope>SUBUNIT</scope>
    <scope>SUBCELLULAR LOCATION</scope>
    <scope>INDUCTION</scope>
    <scope>DISRUPTION PHENOTYPE</scope>
    <source>
        <strain>3937</strain>
    </source>
</reference>
<reference key="2">
    <citation type="journal article" date="2011" name="J. Bacteriol.">
        <title>Genome sequence of the plant-pathogenic bacterium Dickeya dadantii 3937.</title>
        <authorList>
            <person name="Glasner J.D."/>
            <person name="Yang C.H."/>
            <person name="Reverchon S."/>
            <person name="Hugouvieux-Cotte-Pattat N."/>
            <person name="Condemine G."/>
            <person name="Bohin J.P."/>
            <person name="Van Gijsegem F."/>
            <person name="Yang S."/>
            <person name="Franza T."/>
            <person name="Expert D."/>
            <person name="Plunkett G. III"/>
            <person name="San Francisco M.J."/>
            <person name="Charkowski A.O."/>
            <person name="Py B."/>
            <person name="Bell K."/>
            <person name="Rauscher L."/>
            <person name="Rodriguez-Palenzuela P."/>
            <person name="Toussaint A."/>
            <person name="Holeva M.C."/>
            <person name="He S.Y."/>
            <person name="Douet V."/>
            <person name="Boccara M."/>
            <person name="Blanco C."/>
            <person name="Toth I."/>
            <person name="Anderson B.D."/>
            <person name="Biehl B.S."/>
            <person name="Mau B."/>
            <person name="Flynn S.M."/>
            <person name="Barras F."/>
            <person name="Lindeberg M."/>
            <person name="Birch P.R."/>
            <person name="Tsuyumu S."/>
            <person name="Shi X."/>
            <person name="Hibbing M."/>
            <person name="Yap M.N."/>
            <person name="Carpentier M."/>
            <person name="Dassa E."/>
            <person name="Umehara M."/>
            <person name="Kim J.F."/>
            <person name="Rusch M."/>
            <person name="Soni P."/>
            <person name="Mayhew G.F."/>
            <person name="Fouts D.E."/>
            <person name="Gill S.R."/>
            <person name="Blattner F.R."/>
            <person name="Keen N.T."/>
            <person name="Perna N.T."/>
        </authorList>
    </citation>
    <scope>NUCLEOTIDE SEQUENCE [LARGE SCALE GENOMIC DNA]</scope>
    <source>
        <strain>3937</strain>
    </source>
</reference>
<name>OUSX_DICD3</name>
<comment type="function">
    <text evidence="2">Part of the OusB ABC transporter complex involved in glycine betaine and choline uptake. Binds glycine betaine.</text>
</comment>
<comment type="subunit">
    <text evidence="5">The complex is composed of two ATP-binding proteins (OusV), two transmembrane proteins (OusW) and a solute-binding protein (OusX).</text>
</comment>
<comment type="subcellular location">
    <subcellularLocation>
        <location evidence="2">Periplasm</location>
    </subcellularLocation>
</comment>
<comment type="induction">
    <text evidence="2">Induced by increased medium osmolality. Repressed by glycine betaine.</text>
</comment>
<comment type="disruption phenotype">
    <text evidence="2">Uptake of glycine betaine and choline is completely abolished in the ousA-ousB double mutant.</text>
</comment>